<name>ENCAP_HALO1</name>
<organism>
    <name type="scientific">Haliangium ochraceum (strain DSM 14365 / JCM 11303 / SMP-2)</name>
    <dbReference type="NCBI Taxonomy" id="502025"/>
    <lineage>
        <taxon>Bacteria</taxon>
        <taxon>Pseudomonadati</taxon>
        <taxon>Myxococcota</taxon>
        <taxon>Polyangia</taxon>
        <taxon>Haliangiales</taxon>
        <taxon>Kofleriaceae</taxon>
        <taxon>Haliangium</taxon>
    </lineage>
</organism>
<feature type="chain" id="PRO_0000458832" description="Type 1 encapsulin shell protein">
    <location>
        <begin position="1"/>
        <end position="266"/>
    </location>
</feature>
<feature type="helix" evidence="8">
    <location>
        <begin position="6"/>
        <end position="8"/>
    </location>
</feature>
<feature type="helix" evidence="8">
    <location>
        <begin position="13"/>
        <end position="30"/>
    </location>
</feature>
<feature type="helix" evidence="8">
    <location>
        <begin position="33"/>
        <end position="36"/>
    </location>
</feature>
<feature type="strand" evidence="8">
    <location>
        <begin position="37"/>
        <end position="40"/>
    </location>
</feature>
<feature type="strand" evidence="8">
    <location>
        <begin position="49"/>
        <end position="57"/>
    </location>
</feature>
<feature type="strand" evidence="8">
    <location>
        <begin position="68"/>
        <end position="74"/>
    </location>
</feature>
<feature type="strand" evidence="8">
    <location>
        <begin position="76"/>
        <end position="85"/>
    </location>
</feature>
<feature type="helix" evidence="8">
    <location>
        <begin position="86"/>
        <end position="91"/>
    </location>
</feature>
<feature type="helix" evidence="8">
    <location>
        <begin position="92"/>
        <end position="94"/>
    </location>
</feature>
<feature type="helix" evidence="8">
    <location>
        <begin position="102"/>
        <end position="121"/>
    </location>
</feature>
<feature type="helix" evidence="8">
    <location>
        <begin position="124"/>
        <end position="126"/>
    </location>
</feature>
<feature type="helix" evidence="8">
    <location>
        <begin position="131"/>
        <end position="134"/>
    </location>
</feature>
<feature type="helix" evidence="8">
    <location>
        <begin position="145"/>
        <end position="147"/>
    </location>
</feature>
<feature type="helix" evidence="8">
    <location>
        <begin position="148"/>
        <end position="161"/>
    </location>
</feature>
<feature type="strand" evidence="8">
    <location>
        <begin position="168"/>
        <end position="172"/>
    </location>
</feature>
<feature type="helix" evidence="8">
    <location>
        <begin position="174"/>
        <end position="182"/>
    </location>
</feature>
<feature type="helix" evidence="8">
    <location>
        <begin position="190"/>
        <end position="197"/>
    </location>
</feature>
<feature type="strand" evidence="9">
    <location>
        <begin position="198"/>
        <end position="200"/>
    </location>
</feature>
<feature type="strand" evidence="9">
    <location>
        <begin position="203"/>
        <end position="205"/>
    </location>
</feature>
<feature type="strand" evidence="8">
    <location>
        <begin position="210"/>
        <end position="216"/>
    </location>
</feature>
<feature type="strand" evidence="8">
    <location>
        <begin position="218"/>
        <end position="228"/>
    </location>
</feature>
<feature type="strand" evidence="8">
    <location>
        <begin position="230"/>
        <end position="237"/>
    </location>
</feature>
<feature type="strand" evidence="8">
    <location>
        <begin position="239"/>
        <end position="255"/>
    </location>
</feature>
<feature type="helix" evidence="8">
    <location>
        <begin position="257"/>
        <end position="259"/>
    </location>
</feature>
<feature type="strand" evidence="8">
    <location>
        <begin position="260"/>
        <end position="264"/>
    </location>
</feature>
<reference evidence="5" key="1">
    <citation type="journal article" date="2010" name="Stand. Genomic Sci.">
        <title>Complete genome sequence of Haliangium ochraceum type strain (SMP-2).</title>
        <authorList>
            <person name="Ivanova N."/>
            <person name="Daum C."/>
            <person name="Lang E."/>
            <person name="Abt B."/>
            <person name="Kopitz M."/>
            <person name="Saunders E."/>
            <person name="Lapidus A."/>
            <person name="Lucas S."/>
            <person name="Glavina Del Rio T."/>
            <person name="Nolan M."/>
            <person name="Tice H."/>
            <person name="Copeland A."/>
            <person name="Cheng J.F."/>
            <person name="Chen F."/>
            <person name="Bruce D."/>
            <person name="Goodwin L."/>
            <person name="Pitluck S."/>
            <person name="Mavromatis K."/>
            <person name="Pati A."/>
            <person name="Mikhailova N."/>
            <person name="Chen A."/>
            <person name="Palaniappan K."/>
            <person name="Land M."/>
            <person name="Hauser L."/>
            <person name="Chang Y.J."/>
            <person name="Jeffries C.D."/>
            <person name="Detter J.C."/>
            <person name="Brettin T."/>
            <person name="Rohde M."/>
            <person name="Goker M."/>
            <person name="Bristow J."/>
            <person name="Markowitz V."/>
            <person name="Eisen J.A."/>
            <person name="Hugenholtz P."/>
            <person name="Kyrpides N.C."/>
            <person name="Klenk H.P."/>
        </authorList>
    </citation>
    <scope>NUCLEOTIDE SEQUENCE [LARGE SCALE GENOMIC DNA]</scope>
    <source>
        <strain>DSM 14365 / CIP 107738 / JCM 11303 / AJ 13395 / SMP-2</strain>
    </source>
</reference>
<reference key="2">
    <citation type="journal article" date="2021" name="Nat. Commun.">
        <title>Large-scale computational discovery and analysis of virus-derived microbial nanocompartments.</title>
        <authorList>
            <person name="Andreas M.P."/>
            <person name="Giessen T.W."/>
        </authorList>
    </citation>
    <scope>CLASSIFICATION</scope>
</reference>
<reference evidence="6 7" key="3">
    <citation type="journal article" date="2022" name="Sci. Adv.">
        <title>Pore dynamics and asymmetric cargo loading in an encapsulin nanocompartment.</title>
        <authorList>
            <person name="Ross J."/>
            <person name="McIver Z."/>
            <person name="Lambert T."/>
            <person name="Piergentili C."/>
            <person name="Bird J.E."/>
            <person name="Gallagher K.J."/>
            <person name="Cruickshank F.L."/>
            <person name="James P."/>
            <person name="Zarazua-Arvizu E."/>
            <person name="Horsfall L.E."/>
            <person name="Waldron K.J."/>
            <person name="Wilson M.D."/>
            <person name="Mackay C.L."/>
            <person name="Basle A."/>
            <person name="Clarke D.J."/>
            <person name="Marles-Wright J."/>
        </authorList>
    </citation>
    <scope>STRUCTURE BY ELECTRON MICROSCOPY (2.40 ANGSTROMS)</scope>
    <scope>PROTEIN SEQUENCE OF 4-18; 22-85; 89-103; 114-213 AND 230-260</scope>
    <scope>FUNCTION</scope>
    <scope>SUBUNIT</scope>
    <scope>SUBCELLULAR LOCATION</scope>
    <source>
        <strain>DSM 14365 / CIP 107738 / JCM 11303 / AJ 13395 / SMP-2</strain>
    </source>
</reference>
<evidence type="ECO:0000269" key="1">
    <source>
    </source>
</evidence>
<evidence type="ECO:0000303" key="2">
    <source>
    </source>
</evidence>
<evidence type="ECO:0000303" key="3">
    <source>
    </source>
</evidence>
<evidence type="ECO:0000305" key="4">
    <source>
    </source>
</evidence>
<evidence type="ECO:0000312" key="5">
    <source>
        <dbReference type="EMBL" id="ACY16336.1"/>
    </source>
</evidence>
<evidence type="ECO:0007744" key="6">
    <source>
        <dbReference type="PDB" id="7ODW"/>
    </source>
</evidence>
<evidence type="ECO:0007744" key="7">
    <source>
        <dbReference type="PDB" id="7OE2"/>
    </source>
</evidence>
<evidence type="ECO:0007829" key="8">
    <source>
        <dbReference type="PDB" id="7OE2"/>
    </source>
</evidence>
<evidence type="ECO:0007829" key="9">
    <source>
        <dbReference type="PDB" id="7OEU"/>
    </source>
</evidence>
<protein>
    <recommendedName>
        <fullName evidence="2">Type 1 encapsulin shell protein</fullName>
        <shortName evidence="3">Enc</shortName>
    </recommendedName>
</protein>
<comment type="function">
    <text evidence="1">Shell component of a type 1 encapsulin nanocompartment. Assembles into proteinaceous shells about 21 nm in diameter. Small pores form at, or close to, the 2-, 3-, and 5-fold symmetry axes. Data analysis suggests the 5-fold pores open and close with maximal and minimal aperatures of 15 and 5 Angstroms. Cargo protein Fer (ferritin-like protein, probably stores iron) is targeted to the interior via its C-terminal extension; empty intact shells can be isolated in the absence of cargo protein.</text>
</comment>
<comment type="subunit">
    <text evidence="1">This encapsulin nanocompartment is formed by 60 subunits; monomers form 12 pentamers which assemble to form shells. Shells are loaded with 4 encapsulated ferritin-like protein decamers (EncFtn) in a tetrahedral arrangement. A 3 nm gap is consistently seen between the shell and the cargo.</text>
</comment>
<comment type="subcellular location">
    <subcellularLocation>
        <location evidence="1">Encapsulin nanocompartment</location>
    </subcellularLocation>
</comment>
<comment type="similarity">
    <text evidence="4">Belongs to the encapsulin family. Family 1 subfamily.</text>
</comment>
<accession>D0LZ74</accession>
<gene>
    <name evidence="5" type="ordered locus">Hoch_3837</name>
</gene>
<dbReference type="EMBL" id="CP001804">
    <property type="protein sequence ID" value="ACY16336.1"/>
    <property type="molecule type" value="Genomic_DNA"/>
</dbReference>
<dbReference type="RefSeq" id="WP_012828935.1">
    <property type="nucleotide sequence ID" value="NC_013440.1"/>
</dbReference>
<dbReference type="PDB" id="7ODW">
    <property type="method" value="EM"/>
    <property type="resolution" value="2.50 A"/>
    <property type="chains" value="A=1-266"/>
</dbReference>
<dbReference type="PDB" id="7OE2">
    <property type="method" value="EM"/>
    <property type="resolution" value="2.40 A"/>
    <property type="chains" value="A/B/C/D/E=1-266"/>
</dbReference>
<dbReference type="PDB" id="7OEU">
    <property type="method" value="EM"/>
    <property type="resolution" value="2.64 A"/>
    <property type="chains" value="A/B/C/D/E=1-266"/>
</dbReference>
<dbReference type="PDBsum" id="7ODW"/>
<dbReference type="PDBsum" id="7OE2"/>
<dbReference type="PDBsum" id="7OEU"/>
<dbReference type="EMDB" id="EMD-12853"/>
<dbReference type="EMDB" id="EMD-12859"/>
<dbReference type="EMDB" id="EMD-12864"/>
<dbReference type="SMR" id="D0LZ74"/>
<dbReference type="STRING" id="502025.Hoch_3837"/>
<dbReference type="MEROPS" id="U56.001"/>
<dbReference type="KEGG" id="hoh:Hoch_3837"/>
<dbReference type="eggNOG" id="COG1659">
    <property type="taxonomic scope" value="Bacteria"/>
</dbReference>
<dbReference type="HOGENOM" id="CLU_089875_1_0_7"/>
<dbReference type="OrthoDB" id="2922at2"/>
<dbReference type="Proteomes" id="UP000001880">
    <property type="component" value="Chromosome"/>
</dbReference>
<dbReference type="GO" id="GO:0140737">
    <property type="term" value="C:encapsulin nanocompartment"/>
    <property type="evidence" value="ECO:0007669"/>
    <property type="project" value="UniProtKB-SubCell"/>
</dbReference>
<dbReference type="GO" id="GO:0006879">
    <property type="term" value="P:intracellular iron ion homeostasis"/>
    <property type="evidence" value="ECO:0007669"/>
    <property type="project" value="UniProtKB-KW"/>
</dbReference>
<dbReference type="GO" id="GO:0006826">
    <property type="term" value="P:iron ion transport"/>
    <property type="evidence" value="ECO:0007669"/>
    <property type="project" value="UniProtKB-KW"/>
</dbReference>
<dbReference type="Gene3D" id="3.30.2400.30">
    <property type="match status" value="1"/>
</dbReference>
<dbReference type="Gene3D" id="3.30.2320.10">
    <property type="entry name" value="hypothetical protein PF0899 domain"/>
    <property type="match status" value="1"/>
</dbReference>
<dbReference type="InterPro" id="IPR007544">
    <property type="entry name" value="ENCAP"/>
</dbReference>
<dbReference type="InterPro" id="IPR051429">
    <property type="entry name" value="Encapsulin_nc"/>
</dbReference>
<dbReference type="NCBIfam" id="NF041155">
    <property type="entry name" value="encap_f1"/>
    <property type="match status" value="1"/>
</dbReference>
<dbReference type="PANTHER" id="PTHR37165">
    <property type="entry name" value="PEPTIDASE U56 FAMILY"/>
    <property type="match status" value="1"/>
</dbReference>
<dbReference type="PANTHER" id="PTHR37165:SF1">
    <property type="entry name" value="TYPE 1 ENCAPSULIN SHELL PROTEIN"/>
    <property type="match status" value="1"/>
</dbReference>
<dbReference type="Pfam" id="PF04454">
    <property type="entry name" value="Linocin_M18"/>
    <property type="match status" value="1"/>
</dbReference>
<dbReference type="PIRSF" id="PIRSF019254">
    <property type="entry name" value="CFP29"/>
    <property type="match status" value="1"/>
</dbReference>
<keyword id="KW-0002">3D-structure</keyword>
<keyword id="KW-0903">Direct protein sequencing</keyword>
<keyword id="KW-1284">Encapsulin nanocompartment</keyword>
<keyword id="KW-0406">Ion transport</keyword>
<keyword id="KW-0408">Iron</keyword>
<keyword id="KW-0409">Iron storage</keyword>
<keyword id="KW-0410">Iron transport</keyword>
<keyword id="KW-1185">Reference proteome</keyword>
<keyword id="KW-0813">Transport</keyword>
<sequence length="266" mass="28813">MDLLKRHLAPIVPDAWSAIDEEAKEIFQGHLAGRKLVDFRGPFGWEYAAVNTGELRPIDDTPEDVDMKLRQVQPLAEVRVPFTLDVTELDSVARGATNPDLDDVARAAERMVEAEDSAIFHGWAQAGIKGIVDSTPHEALAVASVSDFPRAVLSAADTLRKAGVTGPYALVLGPKAYDDLFAATQDGYPVAKQVQRLVVDGPLVRANALAGALVMSMRGGDYELTVGQDLSIGYAFHDRSKVELFVAESFTFRVLEPGAAVHLRYA</sequence>
<proteinExistence type="evidence at protein level"/>